<accession>Q99M66</accession>
<proteinExistence type="evidence at protein level"/>
<feature type="chain" id="PRO_0000378194" description="Bcl-2-like protein 10">
    <location>
        <begin position="1"/>
        <end position="185"/>
    </location>
</feature>
<feature type="transmembrane region" description="Helical" evidence="3">
    <location>
        <begin position="160"/>
        <end position="182"/>
    </location>
</feature>
<feature type="short sequence motif" description="BH1">
    <location>
        <begin position="76"/>
        <end position="95"/>
    </location>
</feature>
<feature type="short sequence motif" description="BH2">
    <location>
        <begin position="138"/>
        <end position="149"/>
    </location>
</feature>
<sequence>MGDPLQDRTRRLLTDYILFCARAPNTPEPLPTSVEAALLRSVTSQIQQEHQDLFNSFRDYQGNRLELVTQMADELLSNDQEFNWGRLVMLLAFVGTLMNQDRTVKRRRDQRNRLLLERDCYLIVSLLYNRLTGRHRSWLEAHGGWDGFCQFFKNPLPPGFWRRLLIRAILSCFFATAIFYIWKCL</sequence>
<gene>
    <name evidence="6" type="primary">Bcl2l10</name>
    <name evidence="1" type="synonym">Bcl-b</name>
    <name evidence="2" type="synonym">Boo</name>
    <name evidence="2" type="synonym">Diva</name>
</gene>
<comment type="function">
    <text evidence="1 2">Promotes cell survival by suppressing apoptosis induced by BAX but not BAK (By similarity). Increases binding of AHCYL1/IRBIT to ITPR1 (By similarity). Reduces ITPR1-mediated calcium release from the endoplasmic reticulum cooperatively with AHCYL1/IRBIT under normal cellular conditions (By similarity). Under apoptotic stress conditions, dissociates from ITPR1 and is displaced from mitochondria-associated endoplasmic reticulum membranes, leading to increased Ca(2+) transfer to mitochondria which promotes apoptosis (By similarity). Required for the correct formation of the microtubule organizing center during oocyte cell division, potentially via regulation of protein abundance and localization of other microtubule organizing center components such as AURKA and TPX2 (By similarity).</text>
</comment>
<comment type="cofactor">
    <cofactor evidence="1">
        <name>Ca(2+)</name>
        <dbReference type="ChEBI" id="CHEBI:29108"/>
    </cofactor>
</comment>
<comment type="subunit">
    <text evidence="1 2 5">Interacts with BAX (By similarity). Interacts with BCL2, BCL2L1/BCLX (By similarity). Interacts with APAF1 (By similarity). Interacts with ITPR1, ITPR2 and ITPR3; the interaction with ITPR1 is increased in the presence of AHCLY1 (By similarity). Interacts with AHCYL1 (By similarity). Interacts with HIP1R (via ENTH and I/LWEQ domains) (By similarity). Interacts with CASP9 (By similarity). Interacts with BCL2L11/BIM (By similarity). Interacts with BIK (By similarity). Interacts with UBQLN4 (By similarity). Interacts with NME2/NM23-H2 (PubMed:17532299). Interacts with and PMAIP1/NOXA (By similarity). Interacts with TPX2 (By similarity). Interacts with UBQLN1; in the cytoplasm (By similarity). Interacts (via BH1 domain) with BECN1 (By similarity).</text>
</comment>
<comment type="subcellular location">
    <subcellularLocation>
        <location evidence="1">Mitochondrion</location>
    </subcellularLocation>
    <subcellularLocation>
        <location evidence="1">Nucleus membrane</location>
    </subcellularLocation>
    <subcellularLocation>
        <location evidence="1">Endoplasmic reticulum</location>
    </subcellularLocation>
    <subcellularLocation>
        <location evidence="2">Cytoplasm</location>
        <location evidence="2">Cytoskeleton</location>
        <location evidence="2">Spindle</location>
    </subcellularLocation>
    <text evidence="1">Localizes to mitochondria-associated endoplasmic reticulum membranes (MAMs) (By similarity). Localization to MAMs is greatly reduced under apoptotic stress conditions (By similarity).</text>
</comment>
<comment type="tissue specificity">
    <text evidence="4">Expressed in oligodendroglial lineage cells.</text>
</comment>
<comment type="PTM">
    <text evidence="1">Monoubiquitinated by UBQLN1; results in stabilization of BCL2L10 protein abundance and in relocalization from mitochondria to cytoplasm.</text>
</comment>
<comment type="similarity">
    <text evidence="7">Belongs to the Bcl-2 family.</text>
</comment>
<keyword id="KW-0053">Apoptosis</keyword>
<keyword id="KW-0963">Cytoplasm</keyword>
<keyword id="KW-0206">Cytoskeleton</keyword>
<keyword id="KW-0256">Endoplasmic reticulum</keyword>
<keyword id="KW-0472">Membrane</keyword>
<keyword id="KW-0496">Mitochondrion</keyword>
<keyword id="KW-0539">Nucleus</keyword>
<keyword id="KW-1185">Reference proteome</keyword>
<keyword id="KW-0812">Transmembrane</keyword>
<keyword id="KW-1133">Transmembrane helix</keyword>
<keyword id="KW-0832">Ubl conjugation</keyword>
<evidence type="ECO:0000250" key="1">
    <source>
        <dbReference type="UniProtKB" id="Q9HD36"/>
    </source>
</evidence>
<evidence type="ECO:0000250" key="2">
    <source>
        <dbReference type="UniProtKB" id="Q9Z0F3"/>
    </source>
</evidence>
<evidence type="ECO:0000255" key="3"/>
<evidence type="ECO:0000269" key="4">
    <source>
    </source>
</evidence>
<evidence type="ECO:0000269" key="5">
    <source>
    </source>
</evidence>
<evidence type="ECO:0000303" key="6">
    <source>
    </source>
</evidence>
<evidence type="ECO:0000305" key="7"/>
<evidence type="ECO:0000312" key="8">
    <source>
        <dbReference type="RGD" id="621015"/>
    </source>
</evidence>
<name>B2L10_RAT</name>
<protein>
    <recommendedName>
        <fullName evidence="8">Bcl-2-like protein 10</fullName>
        <shortName evidence="1">Bcl2-L-10</shortName>
    </recommendedName>
    <alternativeName>
        <fullName evidence="2">Anti-apoptotic protein Boo</fullName>
    </alternativeName>
    <alternativeName>
        <fullName evidence="1">Apoptosis regulator Bcl-B</fullName>
    </alternativeName>
</protein>
<organism>
    <name type="scientific">Rattus norvegicus</name>
    <name type="common">Rat</name>
    <dbReference type="NCBI Taxonomy" id="10116"/>
    <lineage>
        <taxon>Eukaryota</taxon>
        <taxon>Metazoa</taxon>
        <taxon>Chordata</taxon>
        <taxon>Craniata</taxon>
        <taxon>Vertebrata</taxon>
        <taxon>Euteleostomi</taxon>
        <taxon>Mammalia</taxon>
        <taxon>Eutheria</taxon>
        <taxon>Euarchontoglires</taxon>
        <taxon>Glires</taxon>
        <taxon>Rodentia</taxon>
        <taxon>Myomorpha</taxon>
        <taxon>Muroidea</taxon>
        <taxon>Muridae</taxon>
        <taxon>Murinae</taxon>
        <taxon>Rattus</taxon>
    </lineage>
</organism>
<dbReference type="EMBL" id="AY029163">
    <property type="protein sequence ID" value="AAK31792.1"/>
    <property type="molecule type" value="mRNA"/>
</dbReference>
<dbReference type="RefSeq" id="NP_446185.1">
    <property type="nucleotide sequence ID" value="NM_053733.1"/>
</dbReference>
<dbReference type="SMR" id="Q99M66"/>
<dbReference type="FunCoup" id="Q99M66">
    <property type="interactions" value="17"/>
</dbReference>
<dbReference type="STRING" id="10116.ENSRNOP00000012409"/>
<dbReference type="PhosphoSitePlus" id="Q99M66"/>
<dbReference type="PaxDb" id="10116-ENSRNOP00000012409"/>
<dbReference type="Ensembl" id="ENSRNOT00000012409.4">
    <property type="protein sequence ID" value="ENSRNOP00000012409.3"/>
    <property type="gene ID" value="ENSRNOG00000009308.4"/>
</dbReference>
<dbReference type="GeneID" id="114552"/>
<dbReference type="KEGG" id="rno:114552"/>
<dbReference type="UCSC" id="RGD:621015">
    <property type="organism name" value="rat"/>
</dbReference>
<dbReference type="AGR" id="RGD:621015"/>
<dbReference type="CTD" id="10017"/>
<dbReference type="RGD" id="621015">
    <property type="gene designation" value="Bcl2l10"/>
</dbReference>
<dbReference type="eggNOG" id="KOG4728">
    <property type="taxonomic scope" value="Eukaryota"/>
</dbReference>
<dbReference type="GeneTree" id="ENSGT01130000278292"/>
<dbReference type="HOGENOM" id="CLU_122207_0_0_1"/>
<dbReference type="InParanoid" id="Q99M66"/>
<dbReference type="OMA" id="TDYLEYC"/>
<dbReference type="OrthoDB" id="8856583at2759"/>
<dbReference type="PhylomeDB" id="Q99M66"/>
<dbReference type="TreeFam" id="TF334762"/>
<dbReference type="PRO" id="PR:Q99M66"/>
<dbReference type="Proteomes" id="UP000002494">
    <property type="component" value="Chromosome 8"/>
</dbReference>
<dbReference type="Bgee" id="ENSRNOG00000009308">
    <property type="expression patterns" value="Expressed in ovary and 3 other cell types or tissues"/>
</dbReference>
<dbReference type="GO" id="GO:0005829">
    <property type="term" value="C:cytosol"/>
    <property type="evidence" value="ECO:0000266"/>
    <property type="project" value="RGD"/>
</dbReference>
<dbReference type="GO" id="GO:0005783">
    <property type="term" value="C:endoplasmic reticulum"/>
    <property type="evidence" value="ECO:0000266"/>
    <property type="project" value="RGD"/>
</dbReference>
<dbReference type="GO" id="GO:0016020">
    <property type="term" value="C:membrane"/>
    <property type="evidence" value="ECO:0000266"/>
    <property type="project" value="RGD"/>
</dbReference>
<dbReference type="GO" id="GO:0044233">
    <property type="term" value="C:mitochondria-associated endoplasmic reticulum membrane contact site"/>
    <property type="evidence" value="ECO:0000250"/>
    <property type="project" value="UniProtKB"/>
</dbReference>
<dbReference type="GO" id="GO:0005741">
    <property type="term" value="C:mitochondrial outer membrane"/>
    <property type="evidence" value="ECO:0000318"/>
    <property type="project" value="GO_Central"/>
</dbReference>
<dbReference type="GO" id="GO:0005739">
    <property type="term" value="C:mitochondrion"/>
    <property type="evidence" value="ECO:0000250"/>
    <property type="project" value="UniProtKB"/>
</dbReference>
<dbReference type="GO" id="GO:0031965">
    <property type="term" value="C:nuclear membrane"/>
    <property type="evidence" value="ECO:0007669"/>
    <property type="project" value="UniProtKB-SubCell"/>
</dbReference>
<dbReference type="GO" id="GO:0005819">
    <property type="term" value="C:spindle"/>
    <property type="evidence" value="ECO:0000250"/>
    <property type="project" value="UniProtKB"/>
</dbReference>
<dbReference type="GO" id="GO:0005509">
    <property type="term" value="F:calcium ion binding"/>
    <property type="evidence" value="ECO:0000250"/>
    <property type="project" value="UniProtKB"/>
</dbReference>
<dbReference type="GO" id="GO:0089720">
    <property type="term" value="F:caspase binding"/>
    <property type="evidence" value="ECO:0000266"/>
    <property type="project" value="RGD"/>
</dbReference>
<dbReference type="GO" id="GO:0015267">
    <property type="term" value="F:channel activity"/>
    <property type="evidence" value="ECO:0000318"/>
    <property type="project" value="GO_Central"/>
</dbReference>
<dbReference type="GO" id="GO:0042802">
    <property type="term" value="F:identical protein binding"/>
    <property type="evidence" value="ECO:0000266"/>
    <property type="project" value="RGD"/>
</dbReference>
<dbReference type="GO" id="GO:0006915">
    <property type="term" value="P:apoptotic process"/>
    <property type="evidence" value="ECO:0000250"/>
    <property type="project" value="UniProtKB"/>
</dbReference>
<dbReference type="GO" id="GO:0097192">
    <property type="term" value="P:extrinsic apoptotic signaling pathway in absence of ligand"/>
    <property type="evidence" value="ECO:0000266"/>
    <property type="project" value="RGD"/>
</dbReference>
<dbReference type="GO" id="GO:0097193">
    <property type="term" value="P:intrinsic apoptotic signaling pathway"/>
    <property type="evidence" value="ECO:0000266"/>
    <property type="project" value="RGD"/>
</dbReference>
<dbReference type="GO" id="GO:0008630">
    <property type="term" value="P:intrinsic apoptotic signaling pathway in response to DNA damage"/>
    <property type="evidence" value="ECO:0000318"/>
    <property type="project" value="GO_Central"/>
</dbReference>
<dbReference type="GO" id="GO:0031023">
    <property type="term" value="P:microtubule organizing center organization"/>
    <property type="evidence" value="ECO:0000250"/>
    <property type="project" value="UniProtKB"/>
</dbReference>
<dbReference type="GO" id="GO:0043066">
    <property type="term" value="P:negative regulation of apoptotic process"/>
    <property type="evidence" value="ECO:0000266"/>
    <property type="project" value="RGD"/>
</dbReference>
<dbReference type="GO" id="GO:2001240">
    <property type="term" value="P:negative regulation of extrinsic apoptotic signaling pathway in absence of ligand"/>
    <property type="evidence" value="ECO:0000266"/>
    <property type="project" value="RGD"/>
</dbReference>
<dbReference type="GO" id="GO:2001243">
    <property type="term" value="P:negative regulation of intrinsic apoptotic signaling pathway"/>
    <property type="evidence" value="ECO:0000266"/>
    <property type="project" value="RGD"/>
</dbReference>
<dbReference type="GO" id="GO:0048709">
    <property type="term" value="P:oligodendrocyte differentiation"/>
    <property type="evidence" value="ECO:0000270"/>
    <property type="project" value="RGD"/>
</dbReference>
<dbReference type="GO" id="GO:0043065">
    <property type="term" value="P:positive regulation of apoptotic process"/>
    <property type="evidence" value="ECO:0000266"/>
    <property type="project" value="RGD"/>
</dbReference>
<dbReference type="GO" id="GO:0001836">
    <property type="term" value="P:release of cytochrome c from mitochondria"/>
    <property type="evidence" value="ECO:0000318"/>
    <property type="project" value="GO_Central"/>
</dbReference>
<dbReference type="CDD" id="cd06845">
    <property type="entry name" value="Bcl-2_like"/>
    <property type="match status" value="1"/>
</dbReference>
<dbReference type="FunFam" id="1.10.437.10:FF:000014">
    <property type="entry name" value="Bcl-2-like protein 10"/>
    <property type="match status" value="1"/>
</dbReference>
<dbReference type="Gene3D" id="1.10.437.10">
    <property type="entry name" value="Blc2-like"/>
    <property type="match status" value="1"/>
</dbReference>
<dbReference type="InterPro" id="IPR036834">
    <property type="entry name" value="Bcl-2-like_sf"/>
</dbReference>
<dbReference type="InterPro" id="IPR046371">
    <property type="entry name" value="Bcl-2_BH1-3"/>
</dbReference>
<dbReference type="InterPro" id="IPR026298">
    <property type="entry name" value="Bcl-2_fam"/>
</dbReference>
<dbReference type="InterPro" id="IPR002475">
    <property type="entry name" value="Bcl2-like"/>
</dbReference>
<dbReference type="InterPro" id="IPR020726">
    <property type="entry name" value="Bcl2_BH2_motif_CS"/>
</dbReference>
<dbReference type="PANTHER" id="PTHR11256">
    <property type="entry name" value="BCL-2 RELATED"/>
    <property type="match status" value="1"/>
</dbReference>
<dbReference type="PANTHER" id="PTHR11256:SF47">
    <property type="entry name" value="BCL-2-LIKE PROTEIN 10"/>
    <property type="match status" value="1"/>
</dbReference>
<dbReference type="Pfam" id="PF00452">
    <property type="entry name" value="Bcl-2"/>
    <property type="match status" value="1"/>
</dbReference>
<dbReference type="SMART" id="SM00337">
    <property type="entry name" value="BCL"/>
    <property type="match status" value="1"/>
</dbReference>
<dbReference type="SUPFAM" id="SSF56854">
    <property type="entry name" value="Bcl-2 inhibitors of programmed cell death"/>
    <property type="match status" value="1"/>
</dbReference>
<dbReference type="PROSITE" id="PS50062">
    <property type="entry name" value="BCL2_FAMILY"/>
    <property type="match status" value="1"/>
</dbReference>
<dbReference type="PROSITE" id="PS01258">
    <property type="entry name" value="BH2"/>
    <property type="match status" value="1"/>
</dbReference>
<reference key="1">
    <citation type="journal article" date="2003" name="J. Neurochem.">
        <title>Bcl-2-related protein family gene expression during oligodendroglial differentiation.</title>
        <authorList>
            <person name="Itoh T."/>
            <person name="Itoh A."/>
            <person name="Pleasure D."/>
        </authorList>
    </citation>
    <scope>NUCLEOTIDE SEQUENCE [MRNA]</scope>
    <scope>TISSUE SPECIFICITY</scope>
    <source>
        <strain>Sprague-Dawley</strain>
    </source>
</reference>
<reference key="2">
    <citation type="journal article" date="2007" name="Biochem. Biophys. Res. Commun.">
        <title>NM23-H2 involves in negative regulation of Diva and Bcl2L10 in apoptosis signaling.</title>
        <authorList>
            <person name="Kang Y."/>
            <person name="Lee D.C."/>
            <person name="Han J."/>
            <person name="Yoon S."/>
            <person name="Won M."/>
            <person name="Yeom J.H."/>
            <person name="Seong M.J."/>
            <person name="Ko J.J."/>
            <person name="Lee K.A."/>
            <person name="Lee K."/>
            <person name="Bae J."/>
        </authorList>
    </citation>
    <scope>INTERACTION WITH NME2</scope>
</reference>